<keyword id="KW-0004">4Fe-4S</keyword>
<keyword id="KW-0408">Iron</keyword>
<keyword id="KW-0411">Iron-sulfur</keyword>
<keyword id="KW-0472">Membrane</keyword>
<keyword id="KW-0479">Metal-binding</keyword>
<keyword id="KW-0520">NAD</keyword>
<keyword id="KW-0521">NADP</keyword>
<keyword id="KW-0618">Plastoquinone</keyword>
<keyword id="KW-0874">Quinone</keyword>
<keyword id="KW-1185">Reference proteome</keyword>
<keyword id="KW-0793">Thylakoid</keyword>
<keyword id="KW-1278">Translocase</keyword>
<keyword id="KW-0813">Transport</keyword>
<comment type="function">
    <text evidence="1">NDH-1 shuttles electrons from an unknown electron donor, via FMN and iron-sulfur (Fe-S) centers, to quinones in the respiratory and/or the photosynthetic chain. The immediate electron acceptor for the enzyme in this species is believed to be plastoquinone. Couples the redox reaction to proton translocation, and thus conserves the redox energy in a proton gradient. Cyanobacterial NDH-1 also plays a role in inorganic carbon-concentration.</text>
</comment>
<comment type="catalytic activity">
    <reaction evidence="1">
        <text>a plastoquinone + NADH + (n+1) H(+)(in) = a plastoquinol + NAD(+) + n H(+)(out)</text>
        <dbReference type="Rhea" id="RHEA:42608"/>
        <dbReference type="Rhea" id="RHEA-COMP:9561"/>
        <dbReference type="Rhea" id="RHEA-COMP:9562"/>
        <dbReference type="ChEBI" id="CHEBI:15378"/>
        <dbReference type="ChEBI" id="CHEBI:17757"/>
        <dbReference type="ChEBI" id="CHEBI:57540"/>
        <dbReference type="ChEBI" id="CHEBI:57945"/>
        <dbReference type="ChEBI" id="CHEBI:62192"/>
    </reaction>
</comment>
<comment type="catalytic activity">
    <reaction evidence="1">
        <text>a plastoquinone + NADPH + (n+1) H(+)(in) = a plastoquinol + NADP(+) + n H(+)(out)</text>
        <dbReference type="Rhea" id="RHEA:42612"/>
        <dbReference type="Rhea" id="RHEA-COMP:9561"/>
        <dbReference type="Rhea" id="RHEA-COMP:9562"/>
        <dbReference type="ChEBI" id="CHEBI:15378"/>
        <dbReference type="ChEBI" id="CHEBI:17757"/>
        <dbReference type="ChEBI" id="CHEBI:57783"/>
        <dbReference type="ChEBI" id="CHEBI:58349"/>
        <dbReference type="ChEBI" id="CHEBI:62192"/>
    </reaction>
</comment>
<comment type="cofactor">
    <cofactor evidence="1">
        <name>[4Fe-4S] cluster</name>
        <dbReference type="ChEBI" id="CHEBI:49883"/>
    </cofactor>
    <text evidence="1">Binds 1 [4Fe-4S] cluster.</text>
</comment>
<comment type="subunit">
    <text evidence="1">NDH-1 can be composed of about 15 different subunits; different subcomplexes with different compositions have been identified which probably have different functions.</text>
</comment>
<comment type="subcellular location">
    <subcellularLocation>
        <location evidence="1">Cellular thylakoid membrane</location>
        <topology evidence="1">Peripheral membrane protein</topology>
        <orientation evidence="1">Cytoplasmic side</orientation>
    </subcellularLocation>
</comment>
<comment type="similarity">
    <text evidence="1">Belongs to the complex I 20 kDa subunit family.</text>
</comment>
<gene>
    <name evidence="1" type="primary">ndhK</name>
    <name type="ordered locus">Syncc9902_0231</name>
</gene>
<reference key="1">
    <citation type="submission" date="2005-08" db="EMBL/GenBank/DDBJ databases">
        <title>Complete sequence of Synechococcus sp. CC9902.</title>
        <authorList>
            <person name="Copeland A."/>
            <person name="Lucas S."/>
            <person name="Lapidus A."/>
            <person name="Barry K."/>
            <person name="Detter J.C."/>
            <person name="Glavina T."/>
            <person name="Hammon N."/>
            <person name="Israni S."/>
            <person name="Pitluck S."/>
            <person name="Martinez M."/>
            <person name="Schmutz J."/>
            <person name="Larimer F."/>
            <person name="Land M."/>
            <person name="Kyrpides N."/>
            <person name="Ivanova N."/>
            <person name="Richardson P."/>
        </authorList>
    </citation>
    <scope>NUCLEOTIDE SEQUENCE [LARGE SCALE GENOMIC DNA]</scope>
    <source>
        <strain>CC9902</strain>
    </source>
</reference>
<proteinExistence type="inferred from homology"/>
<feature type="chain" id="PRO_0000358494" description="NAD(P)H-quinone oxidoreductase subunit K">
    <location>
        <begin position="1"/>
        <end position="244"/>
    </location>
</feature>
<feature type="binding site" evidence="1">
    <location>
        <position position="60"/>
    </location>
    <ligand>
        <name>[4Fe-4S] cluster</name>
        <dbReference type="ChEBI" id="CHEBI:49883"/>
    </ligand>
</feature>
<feature type="binding site" evidence="1">
    <location>
        <position position="61"/>
    </location>
    <ligand>
        <name>[4Fe-4S] cluster</name>
        <dbReference type="ChEBI" id="CHEBI:49883"/>
    </ligand>
</feature>
<feature type="binding site" evidence="1">
    <location>
        <position position="125"/>
    </location>
    <ligand>
        <name>[4Fe-4S] cluster</name>
        <dbReference type="ChEBI" id="CHEBI:49883"/>
    </ligand>
</feature>
<feature type="binding site" evidence="1">
    <location>
        <position position="156"/>
    </location>
    <ligand>
        <name>[4Fe-4S] cluster</name>
        <dbReference type="ChEBI" id="CHEBI:49883"/>
    </ligand>
</feature>
<evidence type="ECO:0000255" key="1">
    <source>
        <dbReference type="HAMAP-Rule" id="MF_01356"/>
    </source>
</evidence>
<sequence>MPESPSISAVRDLREATCGPIGTPEVTNELSENIILTSLDDLHNWARLSSLWPLLYGTACCFIEFAALLGSRFDFDRFGLVPRSSPRQADLLIVAGTVTMKMAPALVRLYEQMPEPKYVIAMGACTITGGMFSADSTTAVRGVDKLIPVDLYLPGCPPRPEAIFDAVIKLRKKVGDESLAERSKHQQTHRYFTMTHQMKAVEPQVTGAYLRAESQQAALAAAPAGQTLATDAAVLNPAPEMVQP</sequence>
<name>NDHK_SYNS9</name>
<dbReference type="EC" id="7.1.1.-" evidence="1"/>
<dbReference type="EMBL" id="CP000097">
    <property type="protein sequence ID" value="ABB25206.1"/>
    <property type="molecule type" value="Genomic_DNA"/>
</dbReference>
<dbReference type="RefSeq" id="WP_011359067.1">
    <property type="nucleotide sequence ID" value="NC_007513.1"/>
</dbReference>
<dbReference type="SMR" id="Q3B0C2"/>
<dbReference type="STRING" id="316279.Syncc9902_0231"/>
<dbReference type="KEGG" id="sye:Syncc9902_0231"/>
<dbReference type="eggNOG" id="COG0377">
    <property type="taxonomic scope" value="Bacteria"/>
</dbReference>
<dbReference type="HOGENOM" id="CLU_055737_2_0_3"/>
<dbReference type="OrthoDB" id="9786737at2"/>
<dbReference type="Proteomes" id="UP000002712">
    <property type="component" value="Chromosome"/>
</dbReference>
<dbReference type="GO" id="GO:0031676">
    <property type="term" value="C:plasma membrane-derived thylakoid membrane"/>
    <property type="evidence" value="ECO:0007669"/>
    <property type="project" value="UniProtKB-SubCell"/>
</dbReference>
<dbReference type="GO" id="GO:0045271">
    <property type="term" value="C:respiratory chain complex I"/>
    <property type="evidence" value="ECO:0007669"/>
    <property type="project" value="TreeGrafter"/>
</dbReference>
<dbReference type="GO" id="GO:0051539">
    <property type="term" value="F:4 iron, 4 sulfur cluster binding"/>
    <property type="evidence" value="ECO:0007669"/>
    <property type="project" value="UniProtKB-KW"/>
</dbReference>
<dbReference type="GO" id="GO:0005506">
    <property type="term" value="F:iron ion binding"/>
    <property type="evidence" value="ECO:0007669"/>
    <property type="project" value="UniProtKB-UniRule"/>
</dbReference>
<dbReference type="GO" id="GO:0008137">
    <property type="term" value="F:NADH dehydrogenase (ubiquinone) activity"/>
    <property type="evidence" value="ECO:0007669"/>
    <property type="project" value="InterPro"/>
</dbReference>
<dbReference type="GO" id="GO:0048038">
    <property type="term" value="F:quinone binding"/>
    <property type="evidence" value="ECO:0007669"/>
    <property type="project" value="UniProtKB-KW"/>
</dbReference>
<dbReference type="GO" id="GO:0009060">
    <property type="term" value="P:aerobic respiration"/>
    <property type="evidence" value="ECO:0007669"/>
    <property type="project" value="TreeGrafter"/>
</dbReference>
<dbReference type="GO" id="GO:0015990">
    <property type="term" value="P:electron transport coupled proton transport"/>
    <property type="evidence" value="ECO:0007669"/>
    <property type="project" value="TreeGrafter"/>
</dbReference>
<dbReference type="GO" id="GO:0019684">
    <property type="term" value="P:photosynthesis, light reaction"/>
    <property type="evidence" value="ECO:0007669"/>
    <property type="project" value="UniProtKB-UniRule"/>
</dbReference>
<dbReference type="FunFam" id="3.40.50.12280:FF:000003">
    <property type="entry name" value="NAD(P)H-quinone oxidoreductase subunit K, chloroplastic"/>
    <property type="match status" value="1"/>
</dbReference>
<dbReference type="Gene3D" id="3.40.50.12280">
    <property type="match status" value="1"/>
</dbReference>
<dbReference type="HAMAP" id="MF_01356">
    <property type="entry name" value="NDH1_NuoB"/>
    <property type="match status" value="1"/>
</dbReference>
<dbReference type="InterPro" id="IPR006137">
    <property type="entry name" value="NADH_UbQ_OxRdtase-like_20kDa"/>
</dbReference>
<dbReference type="InterPro" id="IPR006138">
    <property type="entry name" value="NADH_UQ_OxRdtase_20Kd_su"/>
</dbReference>
<dbReference type="NCBIfam" id="TIGR01957">
    <property type="entry name" value="nuoB_fam"/>
    <property type="match status" value="1"/>
</dbReference>
<dbReference type="NCBIfam" id="NF005012">
    <property type="entry name" value="PRK06411.1"/>
    <property type="match status" value="1"/>
</dbReference>
<dbReference type="PANTHER" id="PTHR11995">
    <property type="entry name" value="NADH DEHYDROGENASE"/>
    <property type="match status" value="1"/>
</dbReference>
<dbReference type="PANTHER" id="PTHR11995:SF14">
    <property type="entry name" value="NADH DEHYDROGENASE [UBIQUINONE] IRON-SULFUR PROTEIN 7, MITOCHONDRIAL"/>
    <property type="match status" value="1"/>
</dbReference>
<dbReference type="Pfam" id="PF01058">
    <property type="entry name" value="Oxidored_q6"/>
    <property type="match status" value="1"/>
</dbReference>
<dbReference type="SUPFAM" id="SSF56770">
    <property type="entry name" value="HydA/Nqo6-like"/>
    <property type="match status" value="1"/>
</dbReference>
<dbReference type="PROSITE" id="PS01150">
    <property type="entry name" value="COMPLEX1_20K"/>
    <property type="match status" value="1"/>
</dbReference>
<accession>Q3B0C2</accession>
<protein>
    <recommendedName>
        <fullName evidence="1">NAD(P)H-quinone oxidoreductase subunit K</fullName>
        <ecNumber evidence="1">7.1.1.-</ecNumber>
    </recommendedName>
    <alternativeName>
        <fullName evidence="1">NAD(P)H dehydrogenase I subunit K</fullName>
    </alternativeName>
    <alternativeName>
        <fullName evidence="1">NDH-1 subunit K</fullName>
        <shortName evidence="1">NDH-K</shortName>
    </alternativeName>
</protein>
<organism>
    <name type="scientific">Synechococcus sp. (strain CC9902)</name>
    <dbReference type="NCBI Taxonomy" id="316279"/>
    <lineage>
        <taxon>Bacteria</taxon>
        <taxon>Bacillati</taxon>
        <taxon>Cyanobacteriota</taxon>
        <taxon>Cyanophyceae</taxon>
        <taxon>Synechococcales</taxon>
        <taxon>Synechococcaceae</taxon>
        <taxon>Synechococcus</taxon>
    </lineage>
</organism>